<reference key="1">
    <citation type="journal article" date="1997" name="Nature">
        <title>The complete genome sequence of the Gram-positive bacterium Bacillus subtilis.</title>
        <authorList>
            <person name="Kunst F."/>
            <person name="Ogasawara N."/>
            <person name="Moszer I."/>
            <person name="Albertini A.M."/>
            <person name="Alloni G."/>
            <person name="Azevedo V."/>
            <person name="Bertero M.G."/>
            <person name="Bessieres P."/>
            <person name="Bolotin A."/>
            <person name="Borchert S."/>
            <person name="Borriss R."/>
            <person name="Boursier L."/>
            <person name="Brans A."/>
            <person name="Braun M."/>
            <person name="Brignell S.C."/>
            <person name="Bron S."/>
            <person name="Brouillet S."/>
            <person name="Bruschi C.V."/>
            <person name="Caldwell B."/>
            <person name="Capuano V."/>
            <person name="Carter N.M."/>
            <person name="Choi S.-K."/>
            <person name="Codani J.-J."/>
            <person name="Connerton I.F."/>
            <person name="Cummings N.J."/>
            <person name="Daniel R.A."/>
            <person name="Denizot F."/>
            <person name="Devine K.M."/>
            <person name="Duesterhoeft A."/>
            <person name="Ehrlich S.D."/>
            <person name="Emmerson P.T."/>
            <person name="Entian K.-D."/>
            <person name="Errington J."/>
            <person name="Fabret C."/>
            <person name="Ferrari E."/>
            <person name="Foulger D."/>
            <person name="Fritz C."/>
            <person name="Fujita M."/>
            <person name="Fujita Y."/>
            <person name="Fuma S."/>
            <person name="Galizzi A."/>
            <person name="Galleron N."/>
            <person name="Ghim S.-Y."/>
            <person name="Glaser P."/>
            <person name="Goffeau A."/>
            <person name="Golightly E.J."/>
            <person name="Grandi G."/>
            <person name="Guiseppi G."/>
            <person name="Guy B.J."/>
            <person name="Haga K."/>
            <person name="Haiech J."/>
            <person name="Harwood C.R."/>
            <person name="Henaut A."/>
            <person name="Hilbert H."/>
            <person name="Holsappel S."/>
            <person name="Hosono S."/>
            <person name="Hullo M.-F."/>
            <person name="Itaya M."/>
            <person name="Jones L.-M."/>
            <person name="Joris B."/>
            <person name="Karamata D."/>
            <person name="Kasahara Y."/>
            <person name="Klaerr-Blanchard M."/>
            <person name="Klein C."/>
            <person name="Kobayashi Y."/>
            <person name="Koetter P."/>
            <person name="Koningstein G."/>
            <person name="Krogh S."/>
            <person name="Kumano M."/>
            <person name="Kurita K."/>
            <person name="Lapidus A."/>
            <person name="Lardinois S."/>
            <person name="Lauber J."/>
            <person name="Lazarevic V."/>
            <person name="Lee S.-M."/>
            <person name="Levine A."/>
            <person name="Liu H."/>
            <person name="Masuda S."/>
            <person name="Mauel C."/>
            <person name="Medigue C."/>
            <person name="Medina N."/>
            <person name="Mellado R.P."/>
            <person name="Mizuno M."/>
            <person name="Moestl D."/>
            <person name="Nakai S."/>
            <person name="Noback M."/>
            <person name="Noone D."/>
            <person name="O'Reilly M."/>
            <person name="Ogawa K."/>
            <person name="Ogiwara A."/>
            <person name="Oudega B."/>
            <person name="Park S.-H."/>
            <person name="Parro V."/>
            <person name="Pohl T.M."/>
            <person name="Portetelle D."/>
            <person name="Porwollik S."/>
            <person name="Prescott A.M."/>
            <person name="Presecan E."/>
            <person name="Pujic P."/>
            <person name="Purnelle B."/>
            <person name="Rapoport G."/>
            <person name="Rey M."/>
            <person name="Reynolds S."/>
            <person name="Rieger M."/>
            <person name="Rivolta C."/>
            <person name="Rocha E."/>
            <person name="Roche B."/>
            <person name="Rose M."/>
            <person name="Sadaie Y."/>
            <person name="Sato T."/>
            <person name="Scanlan E."/>
            <person name="Schleich S."/>
            <person name="Schroeter R."/>
            <person name="Scoffone F."/>
            <person name="Sekiguchi J."/>
            <person name="Sekowska A."/>
            <person name="Seror S.J."/>
            <person name="Serror P."/>
            <person name="Shin B.-S."/>
            <person name="Soldo B."/>
            <person name="Sorokin A."/>
            <person name="Tacconi E."/>
            <person name="Takagi T."/>
            <person name="Takahashi H."/>
            <person name="Takemaru K."/>
            <person name="Takeuchi M."/>
            <person name="Tamakoshi A."/>
            <person name="Tanaka T."/>
            <person name="Terpstra P."/>
            <person name="Tognoni A."/>
            <person name="Tosato V."/>
            <person name="Uchiyama S."/>
            <person name="Vandenbol M."/>
            <person name="Vannier F."/>
            <person name="Vassarotti A."/>
            <person name="Viari A."/>
            <person name="Wambutt R."/>
            <person name="Wedler E."/>
            <person name="Wedler H."/>
            <person name="Weitzenegger T."/>
            <person name="Winters P."/>
            <person name="Wipat A."/>
            <person name="Yamamoto H."/>
            <person name="Yamane K."/>
            <person name="Yasumoto K."/>
            <person name="Yata K."/>
            <person name="Yoshida K."/>
            <person name="Yoshikawa H.-F."/>
            <person name="Zumstein E."/>
            <person name="Yoshikawa H."/>
            <person name="Danchin A."/>
        </authorList>
    </citation>
    <scope>NUCLEOTIDE SEQUENCE [LARGE SCALE GENOMIC DNA]</scope>
    <source>
        <strain>168</strain>
    </source>
</reference>
<name>YOYB_BACSU</name>
<accession>C0H429</accession>
<proteinExistence type="predicted"/>
<feature type="chain" id="PRO_0000386665" description="Uncharacterized protein YoyB">
    <location>
        <begin position="1"/>
        <end position="75"/>
    </location>
</feature>
<protein>
    <recommendedName>
        <fullName>Uncharacterized protein YoyB</fullName>
    </recommendedName>
</protein>
<keyword id="KW-1185">Reference proteome</keyword>
<dbReference type="EMBL" id="AL009126">
    <property type="protein sequence ID" value="CAX52637.1"/>
    <property type="molecule type" value="Genomic_DNA"/>
</dbReference>
<dbReference type="RefSeq" id="WP_004399329.1">
    <property type="nucleotide sequence ID" value="NZ_OZ025638.1"/>
</dbReference>
<dbReference type="RefSeq" id="YP_003097740.1">
    <property type="nucleotide sequence ID" value="NC_000964.3"/>
</dbReference>
<dbReference type="FunCoup" id="C0H429">
    <property type="interactions" value="100"/>
</dbReference>
<dbReference type="STRING" id="224308.BSU19259"/>
<dbReference type="PaxDb" id="224308-BSU19259"/>
<dbReference type="EnsemblBacteria" id="CAX52637">
    <property type="protein sequence ID" value="CAX52637"/>
    <property type="gene ID" value="BSU_19259"/>
</dbReference>
<dbReference type="GeneID" id="8303149"/>
<dbReference type="KEGG" id="bsu:BSU19259"/>
<dbReference type="PATRIC" id="fig|224308.179.peg.2106"/>
<dbReference type="eggNOG" id="ENOG5030D96">
    <property type="taxonomic scope" value="Bacteria"/>
</dbReference>
<dbReference type="InParanoid" id="C0H429"/>
<dbReference type="OrthoDB" id="2910170at2"/>
<dbReference type="BioCyc" id="BSUB:BSU19259-MONOMER"/>
<dbReference type="Proteomes" id="UP000001570">
    <property type="component" value="Chromosome"/>
</dbReference>
<sequence length="75" mass="8115">MLPTNINISHLKTNSIGTGSSLTFGSAELRNRCSAIKRNNGFGEQNADGIVMVIPIESIDDRDVSDALSMKINHQ</sequence>
<gene>
    <name type="primary">yoyB</name>
    <name type="ordered locus">BSU19259</name>
</gene>
<organism>
    <name type="scientific">Bacillus subtilis (strain 168)</name>
    <dbReference type="NCBI Taxonomy" id="224308"/>
    <lineage>
        <taxon>Bacteria</taxon>
        <taxon>Bacillati</taxon>
        <taxon>Bacillota</taxon>
        <taxon>Bacilli</taxon>
        <taxon>Bacillales</taxon>
        <taxon>Bacillaceae</taxon>
        <taxon>Bacillus</taxon>
    </lineage>
</organism>